<sequence length="219" mass="24667">MDYDEKRERLAERLRQELNLSRKVYEAIRKVPRHLFVPESYKNEAYVDTPLPIGYGQTISAPHMVAIMCELLDLREGDKVLEVGTGCGYHAAVTAEIVGKSGKVISIEYIPELAERARAILKALGYDNVEVIVGDGSKGYEKEAPYDKIYVTAAAPDIPKPLIEQLKPRGRMVIPVGDSVQWLIIVEKDESGNVRKKNWGSVRFVPLRGEYGFKSVRYD</sequence>
<comment type="function">
    <text evidence="1">Catalyzes the methyl esterification of L-isoaspartyl residues in peptides and proteins that result from spontaneous decomposition of normal L-aspartyl and L-asparaginyl residues. It plays a role in the repair and/or degradation of damaged proteins (By similarity).</text>
</comment>
<comment type="catalytic activity">
    <reaction>
        <text>[protein]-L-isoaspartate + S-adenosyl-L-methionine = [protein]-L-isoaspartate alpha-methyl ester + S-adenosyl-L-homocysteine</text>
        <dbReference type="Rhea" id="RHEA:12705"/>
        <dbReference type="Rhea" id="RHEA-COMP:12143"/>
        <dbReference type="Rhea" id="RHEA-COMP:12144"/>
        <dbReference type="ChEBI" id="CHEBI:57856"/>
        <dbReference type="ChEBI" id="CHEBI:59789"/>
        <dbReference type="ChEBI" id="CHEBI:90596"/>
        <dbReference type="ChEBI" id="CHEBI:90598"/>
        <dbReference type="EC" id="2.1.1.77"/>
    </reaction>
</comment>
<comment type="subcellular location">
    <subcellularLocation>
        <location evidence="1">Cytoplasm</location>
    </subcellularLocation>
</comment>
<comment type="similarity">
    <text evidence="2">Belongs to the methyltransferase superfamily. L-isoaspartyl/D-aspartyl protein methyltransferase family.</text>
</comment>
<evidence type="ECO:0000250" key="1"/>
<evidence type="ECO:0000305" key="2"/>
<organism>
    <name type="scientific">Archaeoglobus fulgidus (strain ATCC 49558 / DSM 4304 / JCM 9628 / NBRC 100126 / VC-16)</name>
    <dbReference type="NCBI Taxonomy" id="224325"/>
    <lineage>
        <taxon>Archaea</taxon>
        <taxon>Methanobacteriati</taxon>
        <taxon>Methanobacteriota</taxon>
        <taxon>Archaeoglobi</taxon>
        <taxon>Archaeoglobales</taxon>
        <taxon>Archaeoglobaceae</taxon>
        <taxon>Archaeoglobus</taxon>
    </lineage>
</organism>
<accession>O27962</accession>
<proteinExistence type="inferred from homology"/>
<name>PIMT2_ARCFU</name>
<protein>
    <recommendedName>
        <fullName>Protein-L-isoaspartate O-methyltransferase 2</fullName>
        <ecNumber>2.1.1.77</ecNumber>
    </recommendedName>
    <alternativeName>
        <fullName>L-isoaspartyl protein carboxyl methyltransferase 2</fullName>
    </alternativeName>
    <alternativeName>
        <fullName>Protein L-isoaspartyl methyltransferase 2</fullName>
    </alternativeName>
    <alternativeName>
        <fullName>Protein-beta-aspartate methyltransferase 2</fullName>
        <shortName>PIMT 2</shortName>
    </alternativeName>
</protein>
<keyword id="KW-0963">Cytoplasm</keyword>
<keyword id="KW-0489">Methyltransferase</keyword>
<keyword id="KW-1185">Reference proteome</keyword>
<keyword id="KW-0949">S-adenosyl-L-methionine</keyword>
<keyword id="KW-0808">Transferase</keyword>
<feature type="chain" id="PRO_0000111913" description="Protein-L-isoaspartate O-methyltransferase 2">
    <location>
        <begin position="1"/>
        <end position="219"/>
    </location>
</feature>
<feature type="active site" evidence="1">
    <location>
        <position position="60"/>
    </location>
</feature>
<reference key="1">
    <citation type="journal article" date="1997" name="Nature">
        <title>The complete genome sequence of the hyperthermophilic, sulphate-reducing archaeon Archaeoglobus fulgidus.</title>
        <authorList>
            <person name="Klenk H.-P."/>
            <person name="Clayton R.A."/>
            <person name="Tomb J.-F."/>
            <person name="White O."/>
            <person name="Nelson K.E."/>
            <person name="Ketchum K.A."/>
            <person name="Dodson R.J."/>
            <person name="Gwinn M.L."/>
            <person name="Hickey E.K."/>
            <person name="Peterson J.D."/>
            <person name="Richardson D.L."/>
            <person name="Kerlavage A.R."/>
            <person name="Graham D.E."/>
            <person name="Kyrpides N.C."/>
            <person name="Fleischmann R.D."/>
            <person name="Quackenbush J."/>
            <person name="Lee N.H."/>
            <person name="Sutton G.G."/>
            <person name="Gill S.R."/>
            <person name="Kirkness E.F."/>
            <person name="Dougherty B.A."/>
            <person name="McKenney K."/>
            <person name="Adams M.D."/>
            <person name="Loftus B.J."/>
            <person name="Peterson S.N."/>
            <person name="Reich C.I."/>
            <person name="McNeil L.K."/>
            <person name="Badger J.H."/>
            <person name="Glodek A."/>
            <person name="Zhou L."/>
            <person name="Overbeek R."/>
            <person name="Gocayne J.D."/>
            <person name="Weidman J.F."/>
            <person name="McDonald L.A."/>
            <person name="Utterback T.R."/>
            <person name="Cotton M.D."/>
            <person name="Spriggs T."/>
            <person name="Artiach P."/>
            <person name="Kaine B.P."/>
            <person name="Sykes S.M."/>
            <person name="Sadow P.W."/>
            <person name="D'Andrea K.P."/>
            <person name="Bowman C."/>
            <person name="Fujii C."/>
            <person name="Garland S.A."/>
            <person name="Mason T.M."/>
            <person name="Olsen G.J."/>
            <person name="Fraser C.M."/>
            <person name="Smith H.O."/>
            <person name="Woese C.R."/>
            <person name="Venter J.C."/>
        </authorList>
    </citation>
    <scope>NUCLEOTIDE SEQUENCE [LARGE SCALE GENOMIC DNA]</scope>
    <source>
        <strain>ATCC 49558 / DSM 4304 / JCM 9628 / NBRC 100126 / VC-16</strain>
    </source>
</reference>
<gene>
    <name type="primary">pcm2</name>
    <name type="ordered locus">AF_2322</name>
</gene>
<dbReference type="EC" id="2.1.1.77"/>
<dbReference type="EMBL" id="AE000782">
    <property type="protein sequence ID" value="AAB88934.1"/>
    <property type="molecule type" value="Genomic_DNA"/>
</dbReference>
<dbReference type="PIR" id="B69540">
    <property type="entry name" value="B69540"/>
</dbReference>
<dbReference type="RefSeq" id="WP_010879811.1">
    <property type="nucleotide sequence ID" value="NC_000917.1"/>
</dbReference>
<dbReference type="SMR" id="O27962"/>
<dbReference type="STRING" id="224325.AF_2322"/>
<dbReference type="PaxDb" id="224325-AF_2322"/>
<dbReference type="EnsemblBacteria" id="AAB88934">
    <property type="protein sequence ID" value="AAB88934"/>
    <property type="gene ID" value="AF_2322"/>
</dbReference>
<dbReference type="KEGG" id="afu:AF_2322"/>
<dbReference type="eggNOG" id="arCOG00976">
    <property type="taxonomic scope" value="Archaea"/>
</dbReference>
<dbReference type="HOGENOM" id="CLU_055432_2_0_2"/>
<dbReference type="OrthoDB" id="33618at2157"/>
<dbReference type="PhylomeDB" id="O27962"/>
<dbReference type="Proteomes" id="UP000002199">
    <property type="component" value="Chromosome"/>
</dbReference>
<dbReference type="GO" id="GO:0005737">
    <property type="term" value="C:cytoplasm"/>
    <property type="evidence" value="ECO:0007669"/>
    <property type="project" value="UniProtKB-SubCell"/>
</dbReference>
<dbReference type="GO" id="GO:0004719">
    <property type="term" value="F:protein-L-isoaspartate (D-aspartate) O-methyltransferase activity"/>
    <property type="evidence" value="ECO:0007669"/>
    <property type="project" value="UniProtKB-UniRule"/>
</dbReference>
<dbReference type="GO" id="GO:0032259">
    <property type="term" value="P:methylation"/>
    <property type="evidence" value="ECO:0007669"/>
    <property type="project" value="UniProtKB-KW"/>
</dbReference>
<dbReference type="GO" id="GO:0036211">
    <property type="term" value="P:protein modification process"/>
    <property type="evidence" value="ECO:0007669"/>
    <property type="project" value="UniProtKB-UniRule"/>
</dbReference>
<dbReference type="GO" id="GO:0030091">
    <property type="term" value="P:protein repair"/>
    <property type="evidence" value="ECO:0007669"/>
    <property type="project" value="UniProtKB-UniRule"/>
</dbReference>
<dbReference type="CDD" id="cd02440">
    <property type="entry name" value="AdoMet_MTases"/>
    <property type="match status" value="1"/>
</dbReference>
<dbReference type="FunFam" id="3.40.50.150:FF:000010">
    <property type="entry name" value="Protein-L-isoaspartate O-methyltransferase"/>
    <property type="match status" value="1"/>
</dbReference>
<dbReference type="Gene3D" id="3.40.50.150">
    <property type="entry name" value="Vaccinia Virus protein VP39"/>
    <property type="match status" value="1"/>
</dbReference>
<dbReference type="HAMAP" id="MF_00090">
    <property type="entry name" value="PIMT"/>
    <property type="match status" value="1"/>
</dbReference>
<dbReference type="InterPro" id="IPR000682">
    <property type="entry name" value="PCMT"/>
</dbReference>
<dbReference type="InterPro" id="IPR029063">
    <property type="entry name" value="SAM-dependent_MTases_sf"/>
</dbReference>
<dbReference type="NCBIfam" id="TIGR00080">
    <property type="entry name" value="pimt"/>
    <property type="match status" value="1"/>
</dbReference>
<dbReference type="NCBIfam" id="NF001453">
    <property type="entry name" value="PRK00312.1"/>
    <property type="match status" value="1"/>
</dbReference>
<dbReference type="NCBIfam" id="NF010549">
    <property type="entry name" value="PRK13942.1"/>
    <property type="match status" value="1"/>
</dbReference>
<dbReference type="PANTHER" id="PTHR11579">
    <property type="entry name" value="PROTEIN-L-ISOASPARTATE O-METHYLTRANSFERASE"/>
    <property type="match status" value="1"/>
</dbReference>
<dbReference type="PANTHER" id="PTHR11579:SF0">
    <property type="entry name" value="PROTEIN-L-ISOASPARTATE(D-ASPARTATE) O-METHYLTRANSFERASE"/>
    <property type="match status" value="1"/>
</dbReference>
<dbReference type="Pfam" id="PF01135">
    <property type="entry name" value="PCMT"/>
    <property type="match status" value="1"/>
</dbReference>
<dbReference type="SUPFAM" id="SSF53335">
    <property type="entry name" value="S-adenosyl-L-methionine-dependent methyltransferases"/>
    <property type="match status" value="1"/>
</dbReference>
<dbReference type="PROSITE" id="PS01279">
    <property type="entry name" value="PCMT"/>
    <property type="match status" value="1"/>
</dbReference>